<reference key="1">
    <citation type="submission" date="2007-06" db="EMBL/GenBank/DDBJ databases">
        <title>Complete sequence of chromosome of Staphylococcus aureus subsp. aureus JH1.</title>
        <authorList>
            <consortium name="US DOE Joint Genome Institute"/>
            <person name="Copeland A."/>
            <person name="Lucas S."/>
            <person name="Lapidus A."/>
            <person name="Barry K."/>
            <person name="Detter J.C."/>
            <person name="Glavina del Rio T."/>
            <person name="Hammon N."/>
            <person name="Israni S."/>
            <person name="Dalin E."/>
            <person name="Tice H."/>
            <person name="Pitluck S."/>
            <person name="Chain P."/>
            <person name="Malfatti S."/>
            <person name="Shin M."/>
            <person name="Vergez L."/>
            <person name="Schmutz J."/>
            <person name="Larimer F."/>
            <person name="Land M."/>
            <person name="Hauser L."/>
            <person name="Kyrpides N."/>
            <person name="Ivanova N."/>
            <person name="Tomasz A."/>
            <person name="Richardson P."/>
        </authorList>
    </citation>
    <scope>NUCLEOTIDE SEQUENCE [LARGE SCALE GENOMIC DNA]</scope>
    <source>
        <strain>JH1</strain>
    </source>
</reference>
<organism>
    <name type="scientific">Staphylococcus aureus (strain JH1)</name>
    <dbReference type="NCBI Taxonomy" id="359787"/>
    <lineage>
        <taxon>Bacteria</taxon>
        <taxon>Bacillati</taxon>
        <taxon>Bacillota</taxon>
        <taxon>Bacilli</taxon>
        <taxon>Bacillales</taxon>
        <taxon>Staphylococcaceae</taxon>
        <taxon>Staphylococcus</taxon>
    </lineage>
</organism>
<gene>
    <name type="primary">sbcD</name>
    <name type="ordered locus">SaurJH1_1434</name>
</gene>
<proteinExistence type="inferred from homology"/>
<keyword id="KW-0233">DNA recombination</keyword>
<keyword id="KW-0235">DNA replication</keyword>
<keyword id="KW-0255">Endonuclease</keyword>
<keyword id="KW-0269">Exonuclease</keyword>
<keyword id="KW-0378">Hydrolase</keyword>
<keyword id="KW-0540">Nuclease</keyword>
<accession>A6U1G6</accession>
<evidence type="ECO:0000250" key="1"/>
<evidence type="ECO:0000305" key="2"/>
<protein>
    <recommendedName>
        <fullName>Nuclease SbcCD subunit D</fullName>
    </recommendedName>
</protein>
<name>SBCD_STAA2</name>
<comment type="function">
    <text evidence="1">SbcCD cleaves DNA hairpin structures. These structures can inhibit DNA replication and are intermediates in certain DNA recombination reactions. The complex acts as a 3'-&gt;5' double strand exonuclease that can open hairpins. It also has a 5' single-strand endonuclease activity (By similarity).</text>
</comment>
<comment type="subunit">
    <text evidence="1">Heterodimer of SbcC and SbcD.</text>
</comment>
<comment type="similarity">
    <text evidence="2">Belongs to the SbcD family.</text>
</comment>
<feature type="chain" id="PRO_0000338480" description="Nuclease SbcCD subunit D">
    <location>
        <begin position="1"/>
        <end position="373"/>
    </location>
</feature>
<sequence>MKIIHTADWHLGKILNGKQLLEDQAYILDMFVEKMKEEEPDIIVIAGDLYDTTYPSKDAIMLLEQAIGKLNLELRIPIIMISGNHDGKERLNYGASWFEHNQLFIRTDFTSINSPIEINGVNFYTLPYATVSEMKHYFEDDTIETHQQGITRCIETIAPEIDEDAVNILISHLTVQGGKTSDSERPLTIGTVESVQKGVFDIFDYVMLGHLHHPFSIEDDKIKYSGSLLQYSFSEAGQAKGYRRLTINDGIINDVFIPLKPLRQLEIISGEYNDVINEKVHVKNKDNYLHFKLKNMSHITDPMMSLKQIYPNTLALTNETFNYNEENNAIEISEKDDMSIIEMFYKHITDKELSDIQSKKIKNILENELRKED</sequence>
<dbReference type="EMBL" id="CP000736">
    <property type="protein sequence ID" value="ABR52284.1"/>
    <property type="molecule type" value="Genomic_DNA"/>
</dbReference>
<dbReference type="SMR" id="A6U1G6"/>
<dbReference type="KEGG" id="sah:SaurJH1_1434"/>
<dbReference type="HOGENOM" id="CLU_038045_0_1_9"/>
<dbReference type="GO" id="GO:0008408">
    <property type="term" value="F:3'-5' exonuclease activity"/>
    <property type="evidence" value="ECO:0007669"/>
    <property type="project" value="InterPro"/>
</dbReference>
<dbReference type="GO" id="GO:0004519">
    <property type="term" value="F:endonuclease activity"/>
    <property type="evidence" value="ECO:0007669"/>
    <property type="project" value="UniProtKB-KW"/>
</dbReference>
<dbReference type="GO" id="GO:0006310">
    <property type="term" value="P:DNA recombination"/>
    <property type="evidence" value="ECO:0007669"/>
    <property type="project" value="UniProtKB-KW"/>
</dbReference>
<dbReference type="GO" id="GO:0006260">
    <property type="term" value="P:DNA replication"/>
    <property type="evidence" value="ECO:0007669"/>
    <property type="project" value="UniProtKB-KW"/>
</dbReference>
<dbReference type="CDD" id="cd00840">
    <property type="entry name" value="MPP_Mre11_N"/>
    <property type="match status" value="1"/>
</dbReference>
<dbReference type="Gene3D" id="3.60.21.10">
    <property type="match status" value="1"/>
</dbReference>
<dbReference type="InterPro" id="IPR004843">
    <property type="entry name" value="Calcineurin-like_PHP_ApaH"/>
</dbReference>
<dbReference type="InterPro" id="IPR050535">
    <property type="entry name" value="DNA_Repair-Maintenance_Comp"/>
</dbReference>
<dbReference type="InterPro" id="IPR029052">
    <property type="entry name" value="Metallo-depent_PP-like"/>
</dbReference>
<dbReference type="InterPro" id="IPR041796">
    <property type="entry name" value="Mre11_N"/>
</dbReference>
<dbReference type="InterPro" id="IPR053381">
    <property type="entry name" value="SbcCD_nuclease"/>
</dbReference>
<dbReference type="InterPro" id="IPR004593">
    <property type="entry name" value="SbcD"/>
</dbReference>
<dbReference type="InterPro" id="IPR026843">
    <property type="entry name" value="SbcD_C"/>
</dbReference>
<dbReference type="NCBIfam" id="TIGR00619">
    <property type="entry name" value="sbcd"/>
    <property type="match status" value="1"/>
</dbReference>
<dbReference type="NCBIfam" id="NF041753">
    <property type="entry name" value="sbcd_Staph"/>
    <property type="match status" value="1"/>
</dbReference>
<dbReference type="PANTHER" id="PTHR30337">
    <property type="entry name" value="COMPONENT OF ATP-DEPENDENT DSDNA EXONUCLEASE"/>
    <property type="match status" value="1"/>
</dbReference>
<dbReference type="PANTHER" id="PTHR30337:SF0">
    <property type="entry name" value="NUCLEASE SBCCD SUBUNIT D"/>
    <property type="match status" value="1"/>
</dbReference>
<dbReference type="Pfam" id="PF00149">
    <property type="entry name" value="Metallophos"/>
    <property type="match status" value="1"/>
</dbReference>
<dbReference type="Pfam" id="PF12320">
    <property type="entry name" value="SbcD_C"/>
    <property type="match status" value="1"/>
</dbReference>
<dbReference type="SUPFAM" id="SSF56300">
    <property type="entry name" value="Metallo-dependent phosphatases"/>
    <property type="match status" value="1"/>
</dbReference>